<organism>
    <name type="scientific">Mus musculus</name>
    <name type="common">Mouse</name>
    <dbReference type="NCBI Taxonomy" id="10090"/>
    <lineage>
        <taxon>Eukaryota</taxon>
        <taxon>Metazoa</taxon>
        <taxon>Chordata</taxon>
        <taxon>Craniata</taxon>
        <taxon>Vertebrata</taxon>
        <taxon>Euteleostomi</taxon>
        <taxon>Mammalia</taxon>
        <taxon>Eutheria</taxon>
        <taxon>Euarchontoglires</taxon>
        <taxon>Glires</taxon>
        <taxon>Rodentia</taxon>
        <taxon>Myomorpha</taxon>
        <taxon>Muroidea</taxon>
        <taxon>Muridae</taxon>
        <taxon>Murinae</taxon>
        <taxon>Mus</taxon>
        <taxon>Mus</taxon>
    </lineage>
</organism>
<protein>
    <recommendedName>
        <fullName>FRAS1-related extracellular matrix protein 1</fullName>
    </recommendedName>
    <alternativeName>
        <fullName>Protein QBRICK</fullName>
    </alternativeName>
</protein>
<sequence length="2191" mass="244544">MHSPGCTGPKAQWFLLLQLLLLHLDRVSATFISINRGLRVMKGSSAFLSGDHLRVAVPKEKDACRLEVVMNEPVTQRVGKLSPQVFDCHFLPNEVKYVHNGCPILDEDSVKLRLYRFTETDTFMETFLLRVYLVEPDCNIIRMSSNVLEVTEFYGLSQAIDKNLLQFDYDRTASLDCTIRLDPLRTQLPAHGKLVVVNRKSEGPRGDQPHSFFSETELGAGLKCPDGSCALELKQVASLKVSCEEFLLTGFHYQHMQPPSPNIDYIPIQLDLTDRRSKTVYKSESAWLPVYIRVGIPNQVPRAAFMAMFVLEVDQFILTPLTTSVLDCEEDETPKPLLVFNITKAPLQGYVTHLLDHTRPISSFTWKDLSDMQVAYQPPNSSHPERRHYTMELEVYDFFFERSAPITVHISIRTADTNAPRVSWNTGLNLLEGQSRAITWEQFQIVDNDDIGAVQLVTIGGLQHGRLTVREGKGFLFTVTDLQAGVVRYHHDDSDTTKDFVAFRIFDGHHSSHHKFPINILPKDDSPPFLITNVVIELEEGKTILIQGSMLRASDMDSSDDYIFFNITKFPQAGEIMKKPGPRLIGYPVPGFLQRDLFSGIIYYRHFGGEIFEDSFEFVLWDSHEPPNLSVPQVVTIHITPVDDQLPKEAPGISRHLVVKETEVAYITKKHLHFLDMESRDGELIYTVTRPPCFSFSHRHLDAGKLFMVDSIPKLTKNPTAPGLSSFTQGLILISANQHTCSSQFASQHAVNHMKVAYMPPMQDIGPSPRHVQFTVSVSNQHGGALHGICFNITVLPVDNQVPEVFTNTLRVVEGGQCTISTEHILVSDVDTPLDSISLSLKERPLHGGVELDGFPLNPRGTFSWRDLNTLKVWYQHDGSEVLQDEIFLEVTDGTNSAAFVLHIEVFPVNDEPPILKADLIPMMHCSEGGEVTITPEYISATDADSDDLELLFLIAREPQHGVVRKAGLHVDRFSQGDVISGAVTYKHTGGEIGLEPCSDTVVLVVSDGEADPLMNGCCYDGPDSSVPLHKSFPTYQLNITVHPVDNQPPSIIIGRMLTVDEGFSAALTTHHLTVVDWDTAPDDLKFMLASQPQFGYLENALPSAGFEKSNIGIRIASFQWTDMKASHINYVQSRHLRVEPTADQFTVYATDGKHRSLETTFHVIINPTNDEAPDLAVQNITVYEGHMVELDSSIISATDRDIPKDPLLFSIALKPQHGLLVDAAISKDSHQIKQLQHEIHSFSVDLLKNGMKLVYAHDDSESSADNFVIQLSDGKHKILKTISVNITPVNDETPTLSKKAEISMAVGDTRVLSSAVLSATDKDSPREKIHYVFERLPQNGQLQLKIGRDWVPLSTGMQCTQEDVDLNLLRYTHAGKTDSQDGDSFTFYLWDEDNRSPAFDCHIIIEDMGKGDIVIHAKPLVVVKGDRGLLTTATLLAVDGADKPEELLYLITSPPRHGQVEYVHSPGVPIASFSQMDIAGQTVCYIHKSRTAVPTDSFRFTISNGLQTQRGVFEITLQTVDSALPVLTKNKRLRLAEGAMGLLSADHLQLTDPDTPPENLTFFLAQLPRHGYLFLRGKALQHNFTQRDVDSGGVAYQHSGGGAREDYFTFLATDRKNQGFVVDGKVQKEPVRFTIQVDQLDKAAPRITHLHSPTQVGLLKNGCYGIYITSRVLKASDPDTEDDQIIFKILRGPLYGRLENTTTGEFIHERFSQKDLSHKTILYIINPSLQVTSDILEFQAMDPTGNTATPQSLDLRWSYIEWAQTAYEVCENVGLLPLEVTRRGYPMDSAFVGVEVNQVSATVGKDFTVTPSKLLQFDPGMSTKMWNIAITYDGLEEDDEVFEVILNSPVNAVLGTQTKAAVKILDSKGGRCHPSNSFNQSKHSTWGKGPWHPLPSGSSSLTTSGSPLLERPPPSFTSGDALQGFGLTDLTQRKTMTQGNGKSVLPSSVCRNGTDTIYNYHGIVSLKLEGDRFSAHKRKAKISIVSQPQRTIKVAELPLADKVESTTDLHFLRQGLRPLFPKNCSVDLKGLFHFEESTHRLYQCDGISWKAWSPQTKGLEDRSCPGGWLLHSGYCHILVTRQKGTWTTATRACREQHQGDLVTVLSRRHMQWLWAMSGRKPFWIGLKNQPRTGHWEWIGGEPVAFTNWRRGAPLHPKPGKNCALVQKRGQWQTKNCSKGKAHNFVCSRKL</sequence>
<gene>
    <name type="primary">Frem1</name>
</gene>
<proteinExistence type="evidence at protein level"/>
<feature type="signal peptide" evidence="3">
    <location>
        <begin position="1"/>
        <end position="29"/>
    </location>
</feature>
<feature type="chain" id="PRO_0000010123" description="FRAS1-related extracellular matrix protein 1">
    <location>
        <begin position="30"/>
        <end position="2191"/>
    </location>
</feature>
<feature type="repeat" description="CSPG 1" evidence="5">
    <location>
        <begin position="300"/>
        <end position="394"/>
    </location>
</feature>
<feature type="repeat" description="CSPG 2" evidence="5">
    <location>
        <begin position="419"/>
        <end position="506"/>
    </location>
</feature>
<feature type="repeat" description="CSPG 3" evidence="5">
    <location>
        <begin position="527"/>
        <end position="621"/>
    </location>
</feature>
<feature type="repeat" description="CSPG 4" evidence="5">
    <location>
        <begin position="648"/>
        <end position="779"/>
    </location>
</feature>
<feature type="repeat" description="CSPG 5" evidence="5">
    <location>
        <begin position="801"/>
        <end position="892"/>
    </location>
</feature>
<feature type="repeat" description="CSPG 6" evidence="5">
    <location>
        <begin position="912"/>
        <end position="1007"/>
    </location>
</feature>
<feature type="repeat" description="CSPG 7" evidence="5">
    <location>
        <begin position="1049"/>
        <end position="1151"/>
    </location>
</feature>
<feature type="repeat" description="CSPG 8" evidence="5">
    <location>
        <begin position="1172"/>
        <end position="1273"/>
    </location>
</feature>
<feature type="repeat" description="CSPG 9" evidence="5">
    <location>
        <begin position="1294"/>
        <end position="1391"/>
    </location>
</feature>
<feature type="repeat" description="CSPG 10" evidence="5">
    <location>
        <begin position="1412"/>
        <end position="1504"/>
    </location>
</feature>
<feature type="repeat" description="CSPG 11" evidence="5">
    <location>
        <begin position="1525"/>
        <end position="1614"/>
    </location>
</feature>
<feature type="repeat" description="CSPG 12" evidence="5">
    <location>
        <begin position="1650"/>
        <end position="1742"/>
    </location>
</feature>
<feature type="domain" description="Calx-beta">
    <location>
        <begin position="1749"/>
        <end position="1848"/>
    </location>
</feature>
<feature type="domain" description="C-type lectin" evidence="4">
    <location>
        <begin position="2072"/>
        <end position="2186"/>
    </location>
</feature>
<feature type="region of interest" description="Disordered" evidence="6">
    <location>
        <begin position="1874"/>
        <end position="1921"/>
    </location>
</feature>
<feature type="short sequence motif" description="Cell attachment site">
    <location>
        <begin position="205"/>
        <end position="207"/>
    </location>
</feature>
<feature type="compositionally biased region" description="Polar residues" evidence="6">
    <location>
        <begin position="1875"/>
        <end position="1885"/>
    </location>
</feature>
<feature type="compositionally biased region" description="Low complexity" evidence="6">
    <location>
        <begin position="1895"/>
        <end position="1910"/>
    </location>
</feature>
<feature type="glycosylation site" description="N-linked (GlcNAc...) asparagine" evidence="3">
    <location>
        <position position="341"/>
    </location>
</feature>
<feature type="glycosylation site" description="N-linked (GlcNAc...) asparagine" evidence="3">
    <location>
        <position position="566"/>
    </location>
</feature>
<feature type="glycosylation site" description="N-linked (GlcNAc...) asparagine" evidence="3">
    <location>
        <position position="628"/>
    </location>
</feature>
<feature type="glycosylation site" description="N-linked (GlcNAc...) asparagine" evidence="3">
    <location>
        <position position="1039"/>
    </location>
</feature>
<feature type="glycosylation site" description="N-linked (GlcNAc...) asparagine" evidence="3">
    <location>
        <position position="1180"/>
    </location>
</feature>
<feature type="glycosylation site" description="N-linked (GlcNAc...) asparagine" evidence="3">
    <location>
        <position position="1584"/>
    </location>
</feature>
<feature type="disulfide bond" evidence="4">
    <location>
        <begin position="2163"/>
        <end position="2177"/>
    </location>
</feature>
<feature type="splice variant" id="VSP_015032" description="In isoform 2." evidence="9">
    <location>
        <begin position="729"/>
        <end position="747"/>
    </location>
</feature>
<feature type="splice variant" id="VSP_015033" description="In isoform 3." evidence="10">
    <original>RFTISNGLQTQRGVFEITLQTVDSALPVLTKNKRLRLAEGAMGLL</original>
    <variation>SRWGHKSPCRLPCLSLPDLPSAMDCRPSVGCLKSHCRLWTAPCLC</variation>
    <location>
        <begin position="1500"/>
        <end position="1544"/>
    </location>
</feature>
<feature type="splice variant" id="VSP_015034" description="In isoform 3." evidence="10">
    <location>
        <begin position="1545"/>
        <end position="2191"/>
    </location>
</feature>
<feature type="mutagenesis site" description="Impairs cell adhesion ability in vitro." evidence="8">
    <original>D</original>
    <variation>E</variation>
    <location>
        <position position="207"/>
    </location>
</feature>
<keyword id="KW-0025">Alternative splicing</keyword>
<keyword id="KW-0084">Basement membrane</keyword>
<keyword id="KW-0106">Calcium</keyword>
<keyword id="KW-0130">Cell adhesion</keyword>
<keyword id="KW-0217">Developmental protein</keyword>
<keyword id="KW-1015">Disulfide bond</keyword>
<keyword id="KW-0272">Extracellular matrix</keyword>
<keyword id="KW-0325">Glycoprotein</keyword>
<keyword id="KW-0430">Lectin</keyword>
<keyword id="KW-0479">Metal-binding</keyword>
<keyword id="KW-1185">Reference proteome</keyword>
<keyword id="KW-0677">Repeat</keyword>
<keyword id="KW-0964">Secreted</keyword>
<keyword id="KW-0732">Signal</keyword>
<accession>Q684R7</accession>
<accession>Q5H8C2</accession>
<accession>Q5M7B3</accession>
<accession>Q8C732</accession>
<reference key="1">
    <citation type="journal article" date="2004" name="Proc. Natl. Acad. Sci. U.S.A.">
        <title>The extracellular matrix gene Frem1 is essential for the normal adhesion of the embryonic epidermis.</title>
        <authorList>
            <person name="Smyth I."/>
            <person name="Du X."/>
            <person name="Taylor M.S."/>
            <person name="Justice M.J."/>
            <person name="Beutler B."/>
            <person name="Jackson I.J."/>
        </authorList>
    </citation>
    <scope>NUCLEOTIDE SEQUENCE [MRNA] (ISOFORM 1)</scope>
    <scope>FUNCTION</scope>
    <scope>DISEASE</scope>
    <scope>TISSUE SPECIFICITY</scope>
    <source>
        <strain>C57BL/6J</strain>
    </source>
</reference>
<reference key="2">
    <citation type="journal article" date="2005" name="Exp. Cell Res.">
        <title>Identification of a novel cell-adhesive protein spatiotemporally expressed in the basement membrane of mouse developing hair follicle.</title>
        <authorList>
            <person name="Kiyozumi D."/>
            <person name="Osada A."/>
            <person name="Sugimoto N."/>
            <person name="Weber C.N."/>
            <person name="Ono Y."/>
            <person name="Imai T."/>
            <person name="Okada A."/>
            <person name="Sekiguchi K."/>
        </authorList>
    </citation>
    <scope>NUCLEOTIDE SEQUENCE [MRNA] (ISOFORM 2)</scope>
    <scope>SUBCELLULAR LOCATION</scope>
    <scope>TISSUE SPECIFICITY</scope>
    <scope>MUTAGENESIS OF ASP-207</scope>
</reference>
<reference key="3">
    <citation type="journal article" date="2005" name="Science">
        <title>The transcriptional landscape of the mammalian genome.</title>
        <authorList>
            <person name="Carninci P."/>
            <person name="Kasukawa T."/>
            <person name="Katayama S."/>
            <person name="Gough J."/>
            <person name="Frith M.C."/>
            <person name="Maeda N."/>
            <person name="Oyama R."/>
            <person name="Ravasi T."/>
            <person name="Lenhard B."/>
            <person name="Wells C."/>
            <person name="Kodzius R."/>
            <person name="Shimokawa K."/>
            <person name="Bajic V.B."/>
            <person name="Brenner S.E."/>
            <person name="Batalov S."/>
            <person name="Forrest A.R."/>
            <person name="Zavolan M."/>
            <person name="Davis M.J."/>
            <person name="Wilming L.G."/>
            <person name="Aidinis V."/>
            <person name="Allen J.E."/>
            <person name="Ambesi-Impiombato A."/>
            <person name="Apweiler R."/>
            <person name="Aturaliya R.N."/>
            <person name="Bailey T.L."/>
            <person name="Bansal M."/>
            <person name="Baxter L."/>
            <person name="Beisel K.W."/>
            <person name="Bersano T."/>
            <person name="Bono H."/>
            <person name="Chalk A.M."/>
            <person name="Chiu K.P."/>
            <person name="Choudhary V."/>
            <person name="Christoffels A."/>
            <person name="Clutterbuck D.R."/>
            <person name="Crowe M.L."/>
            <person name="Dalla E."/>
            <person name="Dalrymple B.P."/>
            <person name="de Bono B."/>
            <person name="Della Gatta G."/>
            <person name="di Bernardo D."/>
            <person name="Down T."/>
            <person name="Engstrom P."/>
            <person name="Fagiolini M."/>
            <person name="Faulkner G."/>
            <person name="Fletcher C.F."/>
            <person name="Fukushima T."/>
            <person name="Furuno M."/>
            <person name="Futaki S."/>
            <person name="Gariboldi M."/>
            <person name="Georgii-Hemming P."/>
            <person name="Gingeras T.R."/>
            <person name="Gojobori T."/>
            <person name="Green R.E."/>
            <person name="Gustincich S."/>
            <person name="Harbers M."/>
            <person name="Hayashi Y."/>
            <person name="Hensch T.K."/>
            <person name="Hirokawa N."/>
            <person name="Hill D."/>
            <person name="Huminiecki L."/>
            <person name="Iacono M."/>
            <person name="Ikeo K."/>
            <person name="Iwama A."/>
            <person name="Ishikawa T."/>
            <person name="Jakt M."/>
            <person name="Kanapin A."/>
            <person name="Katoh M."/>
            <person name="Kawasawa Y."/>
            <person name="Kelso J."/>
            <person name="Kitamura H."/>
            <person name="Kitano H."/>
            <person name="Kollias G."/>
            <person name="Krishnan S.P."/>
            <person name="Kruger A."/>
            <person name="Kummerfeld S.K."/>
            <person name="Kurochkin I.V."/>
            <person name="Lareau L.F."/>
            <person name="Lazarevic D."/>
            <person name="Lipovich L."/>
            <person name="Liu J."/>
            <person name="Liuni S."/>
            <person name="McWilliam S."/>
            <person name="Madan Babu M."/>
            <person name="Madera M."/>
            <person name="Marchionni L."/>
            <person name="Matsuda H."/>
            <person name="Matsuzawa S."/>
            <person name="Miki H."/>
            <person name="Mignone F."/>
            <person name="Miyake S."/>
            <person name="Morris K."/>
            <person name="Mottagui-Tabar S."/>
            <person name="Mulder N."/>
            <person name="Nakano N."/>
            <person name="Nakauchi H."/>
            <person name="Ng P."/>
            <person name="Nilsson R."/>
            <person name="Nishiguchi S."/>
            <person name="Nishikawa S."/>
            <person name="Nori F."/>
            <person name="Ohara O."/>
            <person name="Okazaki Y."/>
            <person name="Orlando V."/>
            <person name="Pang K.C."/>
            <person name="Pavan W.J."/>
            <person name="Pavesi G."/>
            <person name="Pesole G."/>
            <person name="Petrovsky N."/>
            <person name="Piazza S."/>
            <person name="Reed J."/>
            <person name="Reid J.F."/>
            <person name="Ring B.Z."/>
            <person name="Ringwald M."/>
            <person name="Rost B."/>
            <person name="Ruan Y."/>
            <person name="Salzberg S.L."/>
            <person name="Sandelin A."/>
            <person name="Schneider C."/>
            <person name="Schoenbach C."/>
            <person name="Sekiguchi K."/>
            <person name="Semple C.A."/>
            <person name="Seno S."/>
            <person name="Sessa L."/>
            <person name="Sheng Y."/>
            <person name="Shibata Y."/>
            <person name="Shimada H."/>
            <person name="Shimada K."/>
            <person name="Silva D."/>
            <person name="Sinclair B."/>
            <person name="Sperling S."/>
            <person name="Stupka E."/>
            <person name="Sugiura K."/>
            <person name="Sultana R."/>
            <person name="Takenaka Y."/>
            <person name="Taki K."/>
            <person name="Tammoja K."/>
            <person name="Tan S.L."/>
            <person name="Tang S."/>
            <person name="Taylor M.S."/>
            <person name="Tegner J."/>
            <person name="Teichmann S.A."/>
            <person name="Ueda H.R."/>
            <person name="van Nimwegen E."/>
            <person name="Verardo R."/>
            <person name="Wei C.L."/>
            <person name="Yagi K."/>
            <person name="Yamanishi H."/>
            <person name="Zabarovsky E."/>
            <person name="Zhu S."/>
            <person name="Zimmer A."/>
            <person name="Hide W."/>
            <person name="Bult C."/>
            <person name="Grimmond S.M."/>
            <person name="Teasdale R.D."/>
            <person name="Liu E.T."/>
            <person name="Brusic V."/>
            <person name="Quackenbush J."/>
            <person name="Wahlestedt C."/>
            <person name="Mattick J.S."/>
            <person name="Hume D.A."/>
            <person name="Kai C."/>
            <person name="Sasaki D."/>
            <person name="Tomaru Y."/>
            <person name="Fukuda S."/>
            <person name="Kanamori-Katayama M."/>
            <person name="Suzuki M."/>
            <person name="Aoki J."/>
            <person name="Arakawa T."/>
            <person name="Iida J."/>
            <person name="Imamura K."/>
            <person name="Itoh M."/>
            <person name="Kato T."/>
            <person name="Kawaji H."/>
            <person name="Kawagashira N."/>
            <person name="Kawashima T."/>
            <person name="Kojima M."/>
            <person name="Kondo S."/>
            <person name="Konno H."/>
            <person name="Nakano K."/>
            <person name="Ninomiya N."/>
            <person name="Nishio T."/>
            <person name="Okada M."/>
            <person name="Plessy C."/>
            <person name="Shibata K."/>
            <person name="Shiraki T."/>
            <person name="Suzuki S."/>
            <person name="Tagami M."/>
            <person name="Waki K."/>
            <person name="Watahiki A."/>
            <person name="Okamura-Oho Y."/>
            <person name="Suzuki H."/>
            <person name="Kawai J."/>
            <person name="Hayashizaki Y."/>
        </authorList>
    </citation>
    <scope>NUCLEOTIDE SEQUENCE [LARGE SCALE MRNA] OF 1096-2191 (ISOFORM 3)</scope>
    <source>
        <strain>C57BL/6J</strain>
        <tissue>Kidney</tissue>
    </source>
</reference>
<reference key="4">
    <citation type="journal article" date="2004" name="Genome Res.">
        <title>The status, quality, and expansion of the NIH full-length cDNA project: the Mammalian Gene Collection (MGC).</title>
        <authorList>
            <consortium name="The MGC Project Team"/>
        </authorList>
    </citation>
    <scope>NUCLEOTIDE SEQUENCE [LARGE SCALE MRNA] OF 1737-2191</scope>
    <source>
        <tissue>Limb</tissue>
    </source>
</reference>
<comment type="function">
    <text evidence="7">Extracellular matrix protein that plays a role in epidermal differentiation and is required for epidermal adhesion during embryonic development.</text>
</comment>
<comment type="subunit">
    <text evidence="2">Interacts with FREM2.</text>
</comment>
<comment type="subcellular location">
    <subcellularLocation>
        <location evidence="8">Secreted</location>
        <location evidence="8">Extracellular space</location>
        <location evidence="8">Extracellular matrix</location>
        <location evidence="8">Basement membrane</location>
    </subcellularLocation>
    <text evidence="8">Localizes at the basement membrane zone of embryonic epidermis and hair follicles.</text>
</comment>
<comment type="alternative products">
    <event type="alternative splicing"/>
    <isoform>
        <id>Q684R7-1</id>
        <name>1</name>
        <sequence type="displayed"/>
    </isoform>
    <isoform>
        <id>Q684R7-2</id>
        <name>2</name>
        <sequence type="described" ref="VSP_015032"/>
    </isoform>
    <isoform>
        <id>Q684R7-3</id>
        <name>3</name>
        <sequence type="described" ref="VSP_015033 VSP_015034"/>
    </isoform>
</comment>
<comment type="tissue specificity">
    <text evidence="7 8">Expressed in epidermis and hair follicles. Expressed in many developing epidermal appendages, including the whisker and sensory vibrissae, cranial and trunk hair follicles, meibomian glands, teeth, footpads, eyelash primordia and invaginating mammary glands. Limb expression localizes to sheets of dermal cells on the apical and basal surfaces of the digits but, unlike FRAS1, is excluded from the apical ectodermal ridge. Usually expressed at higher level in dermal cells underlying the differentiating epithelial components, especially underlying the epidermis of the head, limbs, and eyelids. Expression in the eyelid dermis is apparent as early as 13 dpc. Postnatal expression in the skin is limited to the dermal papillae. In the kidney, it is expressed from 12.5 dpc in the mesenchyme surrounding the branching ureteric tree, with a strong expression in the more proximal regions of these tubules rather than at the proliferating and branching ends of the ureteric buds. In hair follicle, it is selectively expressed in the vibrissal hair primordia during development. Preferentially expressed in the whisker pad epithelia of 12.5 dpc embryos, in both the epithelial and mesenchymal cells of developing hair follicles. In the early stages of hair follicle development (i.e. stages 0-1), it is expressed in both hair placodes and dermal condensations. In stage 2, it is detected in dermal condensations and adjacent epithelia, but not in the upper region of the hair follicles. Expressed at the tip of developing hair follicles in the later stages (i.e. stages 3-5).</text>
</comment>
<comment type="developmental stage">
    <text>Expressed in the embryos of all stages examined and in some adult tissues including eye, kidney, ovary, urinary bladder and testes; however, the overall expression levels in adult tissues are relatively low compared with those in embryonic tissues.</text>
</comment>
<comment type="domain">
    <text evidence="1">The Calx-beta domain binds calcium with high affinity and undergo a major conformational shift upon binding.</text>
</comment>
<comment type="disease">
    <text evidence="7">Defects in Frem1 are the cause of head blebs (heb) which is a spontaneous mutation that is characterized by absent or malformed eyes, which are often open at birth. Cryptophthalmos is noted in all heb homozygous animals, as is occasional hindlimb polydactyly.</text>
</comment>
<comment type="miscellaneous">
    <text>Was termed QBRICK because it contains 12 repeats: 'Q' stands for queen and is taken from the queen being the 12th in a suit of playing card, and 'BRICK' stands for the repeating unit.</text>
</comment>
<comment type="miscellaneous">
    <text>Frem1 also corresponds to a N-ethyl-N-nitrosourea-induced allele called 'bat'. Homozygous bat mice display similar phenotype than heb mice.</text>
</comment>
<comment type="similarity">
    <text evidence="11">Belongs to the FRAS1 family.</text>
</comment>
<comment type="sequence caution" evidence="11">
    <conflict type="frameshift">
        <sequence resource="EMBL-CDS" id="AAH88732"/>
    </conflict>
</comment>
<comment type="sequence caution" evidence="11">
    <conflict type="erroneous initiation">
        <sequence resource="EMBL-CDS" id="BAC35069"/>
    </conflict>
</comment>
<evidence type="ECO:0000250" key="1"/>
<evidence type="ECO:0000250" key="2">
    <source>
        <dbReference type="UniProtKB" id="Q5SZK8"/>
    </source>
</evidence>
<evidence type="ECO:0000255" key="3"/>
<evidence type="ECO:0000255" key="4">
    <source>
        <dbReference type="PROSITE-ProRule" id="PRU00040"/>
    </source>
</evidence>
<evidence type="ECO:0000255" key="5">
    <source>
        <dbReference type="PROSITE-ProRule" id="PRU01201"/>
    </source>
</evidence>
<evidence type="ECO:0000256" key="6">
    <source>
        <dbReference type="SAM" id="MobiDB-lite"/>
    </source>
</evidence>
<evidence type="ECO:0000269" key="7">
    <source>
    </source>
</evidence>
<evidence type="ECO:0000269" key="8">
    <source>
    </source>
</evidence>
<evidence type="ECO:0000303" key="9">
    <source>
    </source>
</evidence>
<evidence type="ECO:0000303" key="10">
    <source>
    </source>
</evidence>
<evidence type="ECO:0000305" key="11"/>
<dbReference type="EMBL" id="AJ616838">
    <property type="protein sequence ID" value="CAE83577.1"/>
    <property type="molecule type" value="mRNA"/>
</dbReference>
<dbReference type="EMBL" id="AB160986">
    <property type="protein sequence ID" value="BAD89014.1"/>
    <property type="molecule type" value="mRNA"/>
</dbReference>
<dbReference type="EMBL" id="AK052629">
    <property type="protein sequence ID" value="BAC35069.1"/>
    <property type="status" value="ALT_INIT"/>
    <property type="molecule type" value="mRNA"/>
</dbReference>
<dbReference type="EMBL" id="BC088732">
    <property type="protein sequence ID" value="AAH88732.1"/>
    <property type="status" value="ALT_FRAME"/>
    <property type="molecule type" value="mRNA"/>
</dbReference>
<dbReference type="CCDS" id="CCDS38791.1">
    <molecule id="Q684R7-1"/>
</dbReference>
<dbReference type="CCDS" id="CCDS57281.1">
    <molecule id="Q684R7-2"/>
</dbReference>
<dbReference type="RefSeq" id="NP_001185740.1">
    <molecule id="Q684R7-2"/>
    <property type="nucleotide sequence ID" value="NM_001198811.2"/>
</dbReference>
<dbReference type="RefSeq" id="NP_808531.2">
    <molecule id="Q684R7-1"/>
    <property type="nucleotide sequence ID" value="NM_177863.4"/>
</dbReference>
<dbReference type="RefSeq" id="XP_006538076.1">
    <molecule id="Q684R7-2"/>
    <property type="nucleotide sequence ID" value="XM_006538013.5"/>
</dbReference>
<dbReference type="RefSeq" id="XP_006538077.1">
    <molecule id="Q684R7-2"/>
    <property type="nucleotide sequence ID" value="XM_006538014.4"/>
</dbReference>
<dbReference type="RefSeq" id="XP_006538078.1">
    <molecule id="Q684R7-2"/>
    <property type="nucleotide sequence ID" value="XM_006538015.2"/>
</dbReference>
<dbReference type="RefSeq" id="XP_011248357.1">
    <molecule id="Q684R7-2"/>
    <property type="nucleotide sequence ID" value="XM_011250055.4"/>
</dbReference>
<dbReference type="DIP" id="DIP-61243N"/>
<dbReference type="FunCoup" id="Q684R7">
    <property type="interactions" value="150"/>
</dbReference>
<dbReference type="IntAct" id="Q684R7">
    <property type="interactions" value="2"/>
</dbReference>
<dbReference type="STRING" id="10090.ENSMUSP00000071627"/>
<dbReference type="GlyCosmos" id="Q684R7">
    <property type="glycosylation" value="6 sites, No reported glycans"/>
</dbReference>
<dbReference type="GlyGen" id="Q684R7">
    <property type="glycosylation" value="9 sites, 3 N-linked glycans (4 sites)"/>
</dbReference>
<dbReference type="iPTMnet" id="Q684R7"/>
<dbReference type="PhosphoSitePlus" id="Q684R7"/>
<dbReference type="PaxDb" id="10090-ENSMUSP00000071627"/>
<dbReference type="ProteomicsDB" id="266856">
    <molecule id="Q684R7-1"/>
</dbReference>
<dbReference type="ProteomicsDB" id="266857">
    <molecule id="Q684R7-2"/>
</dbReference>
<dbReference type="ProteomicsDB" id="266858">
    <molecule id="Q684R7-3"/>
</dbReference>
<dbReference type="Antibodypedia" id="42751">
    <property type="antibodies" value="89 antibodies from 24 providers"/>
</dbReference>
<dbReference type="DNASU" id="329872"/>
<dbReference type="Ensembl" id="ENSMUST00000071708.12">
    <molecule id="Q684R7-1"/>
    <property type="protein sequence ID" value="ENSMUSP00000071627.6"/>
    <property type="gene ID" value="ENSMUSG00000059049.16"/>
</dbReference>
<dbReference type="Ensembl" id="ENSMUST00000107230.9">
    <molecule id="Q684R7-2"/>
    <property type="protein sequence ID" value="ENSMUSP00000102849.2"/>
    <property type="gene ID" value="ENSMUSG00000059049.16"/>
</dbReference>
<dbReference type="GeneID" id="329872"/>
<dbReference type="KEGG" id="mmu:329872"/>
<dbReference type="UCSC" id="uc008tkm.2">
    <molecule id="Q684R7-1"/>
    <property type="organism name" value="mouse"/>
</dbReference>
<dbReference type="AGR" id="MGI:2670972"/>
<dbReference type="CTD" id="158326"/>
<dbReference type="MGI" id="MGI:2670972">
    <property type="gene designation" value="Frem1"/>
</dbReference>
<dbReference type="VEuPathDB" id="HostDB:ENSMUSG00000059049"/>
<dbReference type="eggNOG" id="KOG3597">
    <property type="taxonomic scope" value="Eukaryota"/>
</dbReference>
<dbReference type="GeneTree" id="ENSGT00940000156990"/>
<dbReference type="InParanoid" id="Q684R7"/>
<dbReference type="OMA" id="DIGPHLQ"/>
<dbReference type="OrthoDB" id="430044at2759"/>
<dbReference type="PhylomeDB" id="Q684R7"/>
<dbReference type="TreeFam" id="TF316876"/>
<dbReference type="BioGRID-ORCS" id="329872">
    <property type="hits" value="1 hit in 77 CRISPR screens"/>
</dbReference>
<dbReference type="ChiTaRS" id="Frem1">
    <property type="organism name" value="mouse"/>
</dbReference>
<dbReference type="PRO" id="PR:Q684R7"/>
<dbReference type="Proteomes" id="UP000000589">
    <property type="component" value="Chromosome 4"/>
</dbReference>
<dbReference type="RNAct" id="Q684R7">
    <property type="molecule type" value="protein"/>
</dbReference>
<dbReference type="Bgee" id="ENSMUSG00000059049">
    <property type="expression patterns" value="Expressed in renal medulla interstitium and 159 other cell types or tissues"/>
</dbReference>
<dbReference type="ExpressionAtlas" id="Q684R7">
    <property type="expression patterns" value="baseline and differential"/>
</dbReference>
<dbReference type="GO" id="GO:0005604">
    <property type="term" value="C:basement membrane"/>
    <property type="evidence" value="ECO:0000314"/>
    <property type="project" value="BHF-UCL"/>
</dbReference>
<dbReference type="GO" id="GO:0062023">
    <property type="term" value="C:collagen-containing extracellular matrix"/>
    <property type="evidence" value="ECO:0007005"/>
    <property type="project" value="BHF-UCL"/>
</dbReference>
<dbReference type="GO" id="GO:0005576">
    <property type="term" value="C:extracellular region"/>
    <property type="evidence" value="ECO:0007669"/>
    <property type="project" value="UniProtKB-KW"/>
</dbReference>
<dbReference type="GO" id="GO:0016020">
    <property type="term" value="C:membrane"/>
    <property type="evidence" value="ECO:0007669"/>
    <property type="project" value="InterPro"/>
</dbReference>
<dbReference type="GO" id="GO:0030246">
    <property type="term" value="F:carbohydrate binding"/>
    <property type="evidence" value="ECO:0007669"/>
    <property type="project" value="UniProtKB-KW"/>
</dbReference>
<dbReference type="GO" id="GO:0046872">
    <property type="term" value="F:metal ion binding"/>
    <property type="evidence" value="ECO:0007669"/>
    <property type="project" value="UniProtKB-KW"/>
</dbReference>
<dbReference type="GO" id="GO:0007154">
    <property type="term" value="P:cell communication"/>
    <property type="evidence" value="ECO:0007669"/>
    <property type="project" value="InterPro"/>
</dbReference>
<dbReference type="GO" id="GO:0007160">
    <property type="term" value="P:cell-matrix adhesion"/>
    <property type="evidence" value="ECO:0000315"/>
    <property type="project" value="MGI"/>
</dbReference>
<dbReference type="GO" id="GO:0097094">
    <property type="term" value="P:craniofacial suture morphogenesis"/>
    <property type="evidence" value="ECO:0000250"/>
    <property type="project" value="UniProtKB"/>
</dbReference>
<dbReference type="CDD" id="cd00037">
    <property type="entry name" value="CLECT"/>
    <property type="match status" value="1"/>
</dbReference>
<dbReference type="FunFam" id="3.10.100.10:FF:000081">
    <property type="entry name" value="FRAS1 related extracellular matrix 1"/>
    <property type="match status" value="1"/>
</dbReference>
<dbReference type="Gene3D" id="2.60.40.2030">
    <property type="match status" value="1"/>
</dbReference>
<dbReference type="Gene3D" id="3.10.100.10">
    <property type="entry name" value="Mannose-Binding Protein A, subunit A"/>
    <property type="match status" value="1"/>
</dbReference>
<dbReference type="InterPro" id="IPR001304">
    <property type="entry name" value="C-type_lectin-like"/>
</dbReference>
<dbReference type="InterPro" id="IPR016186">
    <property type="entry name" value="C-type_lectin-like/link_sf"/>
</dbReference>
<dbReference type="InterPro" id="IPR038081">
    <property type="entry name" value="CalX-like_sf"/>
</dbReference>
<dbReference type="InterPro" id="IPR003644">
    <property type="entry name" value="Calx_beta"/>
</dbReference>
<dbReference type="InterPro" id="IPR039005">
    <property type="entry name" value="CSPG_rpt"/>
</dbReference>
<dbReference type="InterPro" id="IPR016187">
    <property type="entry name" value="CTDL_fold"/>
</dbReference>
<dbReference type="InterPro" id="IPR045658">
    <property type="entry name" value="FRAS1-rel_N"/>
</dbReference>
<dbReference type="InterPro" id="IPR051561">
    <property type="entry name" value="FRAS1_ECM"/>
</dbReference>
<dbReference type="PANTHER" id="PTHR45739:SF7">
    <property type="entry name" value="FRAS1-RELATED EXTRACELLULAR MATRIX PROTEIN 1"/>
    <property type="match status" value="1"/>
</dbReference>
<dbReference type="PANTHER" id="PTHR45739">
    <property type="entry name" value="MATRIX PROTEIN, PUTATIVE-RELATED"/>
    <property type="match status" value="1"/>
</dbReference>
<dbReference type="Pfam" id="PF16184">
    <property type="entry name" value="Cadherin_3"/>
    <property type="match status" value="11"/>
</dbReference>
<dbReference type="Pfam" id="PF03160">
    <property type="entry name" value="Calx-beta"/>
    <property type="match status" value="1"/>
</dbReference>
<dbReference type="Pfam" id="PF19309">
    <property type="entry name" value="Frem_N"/>
    <property type="match status" value="1"/>
</dbReference>
<dbReference type="Pfam" id="PF00059">
    <property type="entry name" value="Lectin_C"/>
    <property type="match status" value="1"/>
</dbReference>
<dbReference type="SMART" id="SM00034">
    <property type="entry name" value="CLECT"/>
    <property type="match status" value="1"/>
</dbReference>
<dbReference type="SUPFAM" id="SSF56436">
    <property type="entry name" value="C-type lectin-like"/>
    <property type="match status" value="1"/>
</dbReference>
<dbReference type="SUPFAM" id="SSF141072">
    <property type="entry name" value="CalX-like"/>
    <property type="match status" value="1"/>
</dbReference>
<dbReference type="PROSITE" id="PS50041">
    <property type="entry name" value="C_TYPE_LECTIN_2"/>
    <property type="match status" value="1"/>
</dbReference>
<dbReference type="PROSITE" id="PS51854">
    <property type="entry name" value="CSPG"/>
    <property type="match status" value="12"/>
</dbReference>
<name>FREM1_MOUSE</name>